<accession>C5BRL2</accession>
<feature type="chain" id="PRO_1000215992" description="Ubiquinone/menaquinone biosynthesis C-methyltransferase UbiE">
    <location>
        <begin position="1"/>
        <end position="249"/>
    </location>
</feature>
<feature type="binding site" evidence="1">
    <location>
        <position position="72"/>
    </location>
    <ligand>
        <name>S-adenosyl-L-methionine</name>
        <dbReference type="ChEBI" id="CHEBI:59789"/>
    </ligand>
</feature>
<feature type="binding site" evidence="1">
    <location>
        <position position="93"/>
    </location>
    <ligand>
        <name>S-adenosyl-L-methionine</name>
        <dbReference type="ChEBI" id="CHEBI:59789"/>
    </ligand>
</feature>
<feature type="binding site" evidence="1">
    <location>
        <begin position="121"/>
        <end position="122"/>
    </location>
    <ligand>
        <name>S-adenosyl-L-methionine</name>
        <dbReference type="ChEBI" id="CHEBI:59789"/>
    </ligand>
</feature>
<dbReference type="EC" id="2.1.1.163" evidence="1"/>
<dbReference type="EC" id="2.1.1.201" evidence="1"/>
<dbReference type="EMBL" id="CP001614">
    <property type="protein sequence ID" value="ACR14057.1"/>
    <property type="molecule type" value="Genomic_DNA"/>
</dbReference>
<dbReference type="RefSeq" id="WP_015820173.1">
    <property type="nucleotide sequence ID" value="NC_012997.1"/>
</dbReference>
<dbReference type="SMR" id="C5BRL2"/>
<dbReference type="STRING" id="377629.TERTU_3595"/>
<dbReference type="KEGG" id="ttu:TERTU_3595"/>
<dbReference type="eggNOG" id="COG2226">
    <property type="taxonomic scope" value="Bacteria"/>
</dbReference>
<dbReference type="HOGENOM" id="CLU_037990_0_0_6"/>
<dbReference type="OrthoDB" id="9808140at2"/>
<dbReference type="UniPathway" id="UPA00079">
    <property type="reaction ID" value="UER00169"/>
</dbReference>
<dbReference type="UniPathway" id="UPA00232"/>
<dbReference type="Proteomes" id="UP000009080">
    <property type="component" value="Chromosome"/>
</dbReference>
<dbReference type="GO" id="GO:0008425">
    <property type="term" value="F:2-methoxy-6-polyprenyl-1,4-benzoquinol methyltransferase activity"/>
    <property type="evidence" value="ECO:0007669"/>
    <property type="project" value="UniProtKB-UniRule"/>
</dbReference>
<dbReference type="GO" id="GO:0043770">
    <property type="term" value="F:demethylmenaquinone methyltransferase activity"/>
    <property type="evidence" value="ECO:0007669"/>
    <property type="project" value="UniProtKB-UniRule"/>
</dbReference>
<dbReference type="GO" id="GO:0009060">
    <property type="term" value="P:aerobic respiration"/>
    <property type="evidence" value="ECO:0007669"/>
    <property type="project" value="UniProtKB-UniRule"/>
</dbReference>
<dbReference type="GO" id="GO:0009234">
    <property type="term" value="P:menaquinone biosynthetic process"/>
    <property type="evidence" value="ECO:0007669"/>
    <property type="project" value="UniProtKB-UniRule"/>
</dbReference>
<dbReference type="GO" id="GO:0032259">
    <property type="term" value="P:methylation"/>
    <property type="evidence" value="ECO:0007669"/>
    <property type="project" value="UniProtKB-KW"/>
</dbReference>
<dbReference type="CDD" id="cd02440">
    <property type="entry name" value="AdoMet_MTases"/>
    <property type="match status" value="1"/>
</dbReference>
<dbReference type="FunFam" id="3.40.50.150:FF:000014">
    <property type="entry name" value="Ubiquinone/menaquinone biosynthesis C-methyltransferase UbiE"/>
    <property type="match status" value="1"/>
</dbReference>
<dbReference type="Gene3D" id="3.40.50.150">
    <property type="entry name" value="Vaccinia Virus protein VP39"/>
    <property type="match status" value="1"/>
</dbReference>
<dbReference type="HAMAP" id="MF_01813">
    <property type="entry name" value="MenG_UbiE_methyltr"/>
    <property type="match status" value="1"/>
</dbReference>
<dbReference type="InterPro" id="IPR029063">
    <property type="entry name" value="SAM-dependent_MTases_sf"/>
</dbReference>
<dbReference type="InterPro" id="IPR004033">
    <property type="entry name" value="UbiE/COQ5_MeTrFase"/>
</dbReference>
<dbReference type="InterPro" id="IPR023576">
    <property type="entry name" value="UbiE/COQ5_MeTrFase_CS"/>
</dbReference>
<dbReference type="NCBIfam" id="TIGR01934">
    <property type="entry name" value="MenG_MenH_UbiE"/>
    <property type="match status" value="1"/>
</dbReference>
<dbReference type="NCBIfam" id="NF001240">
    <property type="entry name" value="PRK00216.1-1"/>
    <property type="match status" value="1"/>
</dbReference>
<dbReference type="NCBIfam" id="NF001244">
    <property type="entry name" value="PRK00216.1-5"/>
    <property type="match status" value="1"/>
</dbReference>
<dbReference type="PANTHER" id="PTHR43591:SF24">
    <property type="entry name" value="2-METHOXY-6-POLYPRENYL-1,4-BENZOQUINOL METHYLASE, MITOCHONDRIAL"/>
    <property type="match status" value="1"/>
</dbReference>
<dbReference type="PANTHER" id="PTHR43591">
    <property type="entry name" value="METHYLTRANSFERASE"/>
    <property type="match status" value="1"/>
</dbReference>
<dbReference type="Pfam" id="PF01209">
    <property type="entry name" value="Ubie_methyltran"/>
    <property type="match status" value="1"/>
</dbReference>
<dbReference type="SUPFAM" id="SSF53335">
    <property type="entry name" value="S-adenosyl-L-methionine-dependent methyltransferases"/>
    <property type="match status" value="1"/>
</dbReference>
<dbReference type="PROSITE" id="PS51608">
    <property type="entry name" value="SAM_MT_UBIE"/>
    <property type="match status" value="1"/>
</dbReference>
<dbReference type="PROSITE" id="PS01183">
    <property type="entry name" value="UBIE_1"/>
    <property type="match status" value="1"/>
</dbReference>
<dbReference type="PROSITE" id="PS01184">
    <property type="entry name" value="UBIE_2"/>
    <property type="match status" value="1"/>
</dbReference>
<organism>
    <name type="scientific">Teredinibacter turnerae (strain ATCC 39867 / T7901)</name>
    <dbReference type="NCBI Taxonomy" id="377629"/>
    <lineage>
        <taxon>Bacteria</taxon>
        <taxon>Pseudomonadati</taxon>
        <taxon>Pseudomonadota</taxon>
        <taxon>Gammaproteobacteria</taxon>
        <taxon>Cellvibrionales</taxon>
        <taxon>Cellvibrionaceae</taxon>
        <taxon>Teredinibacter</taxon>
    </lineage>
</organism>
<sequence>MSDENTTHFGFETVNAADKAERVAGVFHSVAAKYDLMNDVMSGGIHRLWKKFTIELSGVRPGDRVLDIAGGTGDLTAKFARLVGDEGQVVLADINDSMLKVGRDKLVDKGFLGNVQYAQADAQFLPFPDNTFDCITIAFGLRNVTDKDMALAAMNRVLKPGGRLLVLEFSKPQNSLLEKAYDLYSFNVLPMMGKLITQDADSYRYLAESIRMHPDQQTLKGMMENAGFAQCRYYNMTGGIVALHKGTKA</sequence>
<gene>
    <name evidence="1" type="primary">ubiE</name>
    <name type="ordered locus">TERTU_3595</name>
</gene>
<comment type="function">
    <text evidence="1">Methyltransferase required for the conversion of demethylmenaquinol (DMKH2) to menaquinol (MKH2) and the conversion of 2-polyprenyl-6-methoxy-1,4-benzoquinol (DDMQH2) to 2-polyprenyl-3-methyl-6-methoxy-1,4-benzoquinol (DMQH2).</text>
</comment>
<comment type="catalytic activity">
    <reaction evidence="1">
        <text>a 2-demethylmenaquinol + S-adenosyl-L-methionine = a menaquinol + S-adenosyl-L-homocysteine + H(+)</text>
        <dbReference type="Rhea" id="RHEA:42640"/>
        <dbReference type="Rhea" id="RHEA-COMP:9539"/>
        <dbReference type="Rhea" id="RHEA-COMP:9563"/>
        <dbReference type="ChEBI" id="CHEBI:15378"/>
        <dbReference type="ChEBI" id="CHEBI:18151"/>
        <dbReference type="ChEBI" id="CHEBI:55437"/>
        <dbReference type="ChEBI" id="CHEBI:57856"/>
        <dbReference type="ChEBI" id="CHEBI:59789"/>
        <dbReference type="EC" id="2.1.1.163"/>
    </reaction>
</comment>
<comment type="catalytic activity">
    <reaction evidence="1">
        <text>a 2-methoxy-6-(all-trans-polyprenyl)benzene-1,4-diol + S-adenosyl-L-methionine = a 5-methoxy-2-methyl-3-(all-trans-polyprenyl)benzene-1,4-diol + S-adenosyl-L-homocysteine + H(+)</text>
        <dbReference type="Rhea" id="RHEA:28286"/>
        <dbReference type="Rhea" id="RHEA-COMP:10858"/>
        <dbReference type="Rhea" id="RHEA-COMP:10859"/>
        <dbReference type="ChEBI" id="CHEBI:15378"/>
        <dbReference type="ChEBI" id="CHEBI:57856"/>
        <dbReference type="ChEBI" id="CHEBI:59789"/>
        <dbReference type="ChEBI" id="CHEBI:84166"/>
        <dbReference type="ChEBI" id="CHEBI:84167"/>
        <dbReference type="EC" id="2.1.1.201"/>
    </reaction>
</comment>
<comment type="pathway">
    <text evidence="1">Quinol/quinone metabolism; menaquinone biosynthesis; menaquinol from 1,4-dihydroxy-2-naphthoate: step 2/2.</text>
</comment>
<comment type="pathway">
    <text evidence="1">Cofactor biosynthesis; ubiquinone biosynthesis.</text>
</comment>
<comment type="similarity">
    <text evidence="1">Belongs to the class I-like SAM-binding methyltransferase superfamily. MenG/UbiE family.</text>
</comment>
<evidence type="ECO:0000255" key="1">
    <source>
        <dbReference type="HAMAP-Rule" id="MF_01813"/>
    </source>
</evidence>
<protein>
    <recommendedName>
        <fullName evidence="1">Ubiquinone/menaquinone biosynthesis C-methyltransferase UbiE</fullName>
        <ecNumber evidence="1">2.1.1.163</ecNumber>
        <ecNumber evidence="1">2.1.1.201</ecNumber>
    </recommendedName>
    <alternativeName>
        <fullName evidence="1">2-methoxy-6-polyprenyl-1,4-benzoquinol methylase</fullName>
    </alternativeName>
    <alternativeName>
        <fullName evidence="1">Demethylmenaquinone methyltransferase</fullName>
    </alternativeName>
</protein>
<reference key="1">
    <citation type="journal article" date="2009" name="PLoS ONE">
        <title>The complete genome of Teredinibacter turnerae T7901: an intracellular endosymbiont of marine wood-boring bivalves (shipworms).</title>
        <authorList>
            <person name="Yang J.C."/>
            <person name="Madupu R."/>
            <person name="Durkin A.S."/>
            <person name="Ekborg N.A."/>
            <person name="Pedamallu C.S."/>
            <person name="Hostetler J.B."/>
            <person name="Radune D."/>
            <person name="Toms B.S."/>
            <person name="Henrissat B."/>
            <person name="Coutinho P.M."/>
            <person name="Schwarz S."/>
            <person name="Field L."/>
            <person name="Trindade-Silva A.E."/>
            <person name="Soares C.A.G."/>
            <person name="Elshahawi S."/>
            <person name="Hanora A."/>
            <person name="Schmidt E.W."/>
            <person name="Haygood M.G."/>
            <person name="Posfai J."/>
            <person name="Benner J."/>
            <person name="Madinger C."/>
            <person name="Nove J."/>
            <person name="Anton B."/>
            <person name="Chaudhary K."/>
            <person name="Foster J."/>
            <person name="Holman A."/>
            <person name="Kumar S."/>
            <person name="Lessard P.A."/>
            <person name="Luyten Y.A."/>
            <person name="Slatko B."/>
            <person name="Wood N."/>
            <person name="Wu B."/>
            <person name="Teplitski M."/>
            <person name="Mougous J.D."/>
            <person name="Ward N."/>
            <person name="Eisen J.A."/>
            <person name="Badger J.H."/>
            <person name="Distel D.L."/>
        </authorList>
    </citation>
    <scope>NUCLEOTIDE SEQUENCE [LARGE SCALE GENOMIC DNA]</scope>
    <source>
        <strain>ATCC 39867 / T7901</strain>
    </source>
</reference>
<name>UBIE_TERTT</name>
<proteinExistence type="inferred from homology"/>
<keyword id="KW-0474">Menaquinone biosynthesis</keyword>
<keyword id="KW-0489">Methyltransferase</keyword>
<keyword id="KW-1185">Reference proteome</keyword>
<keyword id="KW-0949">S-adenosyl-L-methionine</keyword>
<keyword id="KW-0808">Transferase</keyword>
<keyword id="KW-0831">Ubiquinone biosynthesis</keyword>